<name>MALI_VIBFU</name>
<evidence type="ECO:0000255" key="1">
    <source>
        <dbReference type="PROSITE-ProRule" id="PRU00111"/>
    </source>
</evidence>
<gene>
    <name type="primary">malI</name>
</gene>
<feature type="chain" id="PRO_0000107967" description="Maltose regulon regulatory protein MalI">
    <location>
        <begin position="1"/>
        <end position="137" status="greater than"/>
    </location>
</feature>
<feature type="domain" description="HTH lacI-type" evidence="1">
    <location>
        <begin position="6"/>
        <end position="60"/>
    </location>
</feature>
<feature type="DNA-binding region" description="H-T-H motif" evidence="1">
    <location>
        <begin position="8"/>
        <end position="27"/>
    </location>
</feature>
<feature type="non-terminal residue">
    <location>
        <position position="137"/>
    </location>
</feature>
<sequence length="137" mass="14666">MSSNKVTITEVAKHAGVSVTTVSMVLGNKGRISPDTIEKVNASVEALGYIRNRAAANLRSNSSEIIGLILKDISDPYDAEVTAGLSEEIEQQGYMLFLAQCGDSQEKFEHCVLTMARQGVGGIAFCSIGENQQLNVD</sequence>
<accession>P96158</accession>
<keyword id="KW-0238">DNA-binding</keyword>
<keyword id="KW-0678">Repressor</keyword>
<keyword id="KW-0804">Transcription</keyword>
<keyword id="KW-0805">Transcription regulation</keyword>
<organism>
    <name type="scientific">Vibrio furnissii</name>
    <dbReference type="NCBI Taxonomy" id="29494"/>
    <lineage>
        <taxon>Bacteria</taxon>
        <taxon>Pseudomonadati</taxon>
        <taxon>Pseudomonadota</taxon>
        <taxon>Gammaproteobacteria</taxon>
        <taxon>Vibrionales</taxon>
        <taxon>Vibrionaceae</taxon>
        <taxon>Vibrio</taxon>
    </lineage>
</organism>
<reference key="1">
    <citation type="journal article" date="1996" name="J. Biol. Chem.">
        <title>Sugar transport by the marine chitinolytic bacterium Vibrio furnissii. Molecular cloning and analysis of the glucose and N-acetylglucosamine permeases.</title>
        <authorList>
            <person name="Bouma C.L."/>
            <person name="Roseman S."/>
        </authorList>
    </citation>
    <scope>NUCLEOTIDE SEQUENCE [GENOMIC DNA]</scope>
    <source>
        <strain>SR1514</strain>
    </source>
</reference>
<proteinExistence type="predicted"/>
<protein>
    <recommendedName>
        <fullName>Maltose regulon regulatory protein MalI</fullName>
    </recommendedName>
</protein>
<comment type="function">
    <text>Repressor for the malX and malY genes.</text>
</comment>
<dbReference type="EMBL" id="U65013">
    <property type="protein sequence ID" value="AAC44675.1"/>
    <property type="molecule type" value="Genomic_DNA"/>
</dbReference>
<dbReference type="SMR" id="P96158"/>
<dbReference type="GO" id="GO:0003700">
    <property type="term" value="F:DNA-binding transcription factor activity"/>
    <property type="evidence" value="ECO:0007669"/>
    <property type="project" value="TreeGrafter"/>
</dbReference>
<dbReference type="GO" id="GO:0000976">
    <property type="term" value="F:transcription cis-regulatory region binding"/>
    <property type="evidence" value="ECO:0007669"/>
    <property type="project" value="TreeGrafter"/>
</dbReference>
<dbReference type="CDD" id="cd01392">
    <property type="entry name" value="HTH_LacI"/>
    <property type="match status" value="1"/>
</dbReference>
<dbReference type="Gene3D" id="3.40.50.2300">
    <property type="match status" value="1"/>
</dbReference>
<dbReference type="Gene3D" id="1.10.260.40">
    <property type="entry name" value="lambda repressor-like DNA-binding domains"/>
    <property type="match status" value="1"/>
</dbReference>
<dbReference type="InterPro" id="IPR000843">
    <property type="entry name" value="HTH_LacI"/>
</dbReference>
<dbReference type="InterPro" id="IPR010982">
    <property type="entry name" value="Lambda_DNA-bd_dom_sf"/>
</dbReference>
<dbReference type="InterPro" id="IPR001761">
    <property type="entry name" value="Peripla_BP/Lac1_sug-bd_dom"/>
</dbReference>
<dbReference type="InterPro" id="IPR028082">
    <property type="entry name" value="Peripla_BP_I"/>
</dbReference>
<dbReference type="PANTHER" id="PTHR30146:SF148">
    <property type="entry name" value="HTH-TYPE TRANSCRIPTIONAL REPRESSOR PURR-RELATED"/>
    <property type="match status" value="1"/>
</dbReference>
<dbReference type="PANTHER" id="PTHR30146">
    <property type="entry name" value="LACI-RELATED TRANSCRIPTIONAL REPRESSOR"/>
    <property type="match status" value="1"/>
</dbReference>
<dbReference type="Pfam" id="PF00356">
    <property type="entry name" value="LacI"/>
    <property type="match status" value="1"/>
</dbReference>
<dbReference type="Pfam" id="PF00532">
    <property type="entry name" value="Peripla_BP_1"/>
    <property type="match status" value="1"/>
</dbReference>
<dbReference type="SMART" id="SM00354">
    <property type="entry name" value="HTH_LACI"/>
    <property type="match status" value="1"/>
</dbReference>
<dbReference type="SUPFAM" id="SSF47413">
    <property type="entry name" value="lambda repressor-like DNA-binding domains"/>
    <property type="match status" value="1"/>
</dbReference>
<dbReference type="SUPFAM" id="SSF53822">
    <property type="entry name" value="Periplasmic binding protein-like I"/>
    <property type="match status" value="1"/>
</dbReference>
<dbReference type="PROSITE" id="PS00356">
    <property type="entry name" value="HTH_LACI_1"/>
    <property type="match status" value="1"/>
</dbReference>
<dbReference type="PROSITE" id="PS50932">
    <property type="entry name" value="HTH_LACI_2"/>
    <property type="match status" value="1"/>
</dbReference>